<organism>
    <name type="scientific">Pelobacter propionicus (strain DSM 2379 / NBRC 103807 / OttBd1)</name>
    <dbReference type="NCBI Taxonomy" id="338966"/>
    <lineage>
        <taxon>Bacteria</taxon>
        <taxon>Pseudomonadati</taxon>
        <taxon>Thermodesulfobacteriota</taxon>
        <taxon>Desulfuromonadia</taxon>
        <taxon>Desulfuromonadales</taxon>
        <taxon>Desulfuromonadaceae</taxon>
        <taxon>Pelobacter</taxon>
    </lineage>
</organism>
<proteinExistence type="inferred from homology"/>
<sequence length="460" mass="49883">MYGKIEKIHFVGIGGIGMSGIAEVLLNLGYKVSGSDLRGSDITERLARLGAEIGIGHKADNLKDVDVVVISSAVHDDNPEVVEAKRLHVPVIPRAEMLAELMRMKFGIAIAGTHGKTTTTSMAASILGHAGIDPTIVIGGKLNAIGTNAQLGQGKFLLAEADESDGSFLVLSPTIAVVTNIDADHLDHYSGGIEEIKDTFVKFINKVPFYGMAVLCLDDPNIRAILPRVKKRYMTYGLSSQADIRATHVRHDGFTTSFTAHFKGYRLGEISFTMPGAHNVLNAMACIAVALELDVPFSAIQEGFSRFGGVGRRFTIKGEPRGITVVDDYGHHPAEIKATLAAARLGWPERRIVAVFQPHRYTRTHELFGEFVTAFYDADVLILTDVYAAGEQPVEGATAERLSQEILRHGQKDVTWIPNRELIPQHLLGIVKEGDMVITLGAGSIWQQGEALVTLLEKTS</sequence>
<name>MURC_PELPD</name>
<accession>A1AU60</accession>
<gene>
    <name evidence="1" type="primary">murC</name>
    <name type="ordered locus">Ppro_3288</name>
</gene>
<protein>
    <recommendedName>
        <fullName evidence="1">UDP-N-acetylmuramate--L-alanine ligase</fullName>
        <ecNumber evidence="1">6.3.2.8</ecNumber>
    </recommendedName>
    <alternativeName>
        <fullName evidence="1">UDP-N-acetylmuramoyl-L-alanine synthetase</fullName>
    </alternativeName>
</protein>
<evidence type="ECO:0000255" key="1">
    <source>
        <dbReference type="HAMAP-Rule" id="MF_00046"/>
    </source>
</evidence>
<dbReference type="EC" id="6.3.2.8" evidence="1"/>
<dbReference type="EMBL" id="CP000482">
    <property type="protein sequence ID" value="ABL00881.1"/>
    <property type="molecule type" value="Genomic_DNA"/>
</dbReference>
<dbReference type="RefSeq" id="WP_011737098.1">
    <property type="nucleotide sequence ID" value="NC_008609.1"/>
</dbReference>
<dbReference type="SMR" id="A1AU60"/>
<dbReference type="STRING" id="338966.Ppro_3288"/>
<dbReference type="KEGG" id="ppd:Ppro_3288"/>
<dbReference type="eggNOG" id="COG0773">
    <property type="taxonomic scope" value="Bacteria"/>
</dbReference>
<dbReference type="HOGENOM" id="CLU_028104_2_2_7"/>
<dbReference type="OrthoDB" id="9804126at2"/>
<dbReference type="UniPathway" id="UPA00219"/>
<dbReference type="Proteomes" id="UP000006732">
    <property type="component" value="Chromosome"/>
</dbReference>
<dbReference type="GO" id="GO:0005737">
    <property type="term" value="C:cytoplasm"/>
    <property type="evidence" value="ECO:0007669"/>
    <property type="project" value="UniProtKB-SubCell"/>
</dbReference>
<dbReference type="GO" id="GO:0005524">
    <property type="term" value="F:ATP binding"/>
    <property type="evidence" value="ECO:0007669"/>
    <property type="project" value="UniProtKB-UniRule"/>
</dbReference>
<dbReference type="GO" id="GO:0008763">
    <property type="term" value="F:UDP-N-acetylmuramate-L-alanine ligase activity"/>
    <property type="evidence" value="ECO:0007669"/>
    <property type="project" value="UniProtKB-UniRule"/>
</dbReference>
<dbReference type="GO" id="GO:0051301">
    <property type="term" value="P:cell division"/>
    <property type="evidence" value="ECO:0007669"/>
    <property type="project" value="UniProtKB-KW"/>
</dbReference>
<dbReference type="GO" id="GO:0071555">
    <property type="term" value="P:cell wall organization"/>
    <property type="evidence" value="ECO:0007669"/>
    <property type="project" value="UniProtKB-KW"/>
</dbReference>
<dbReference type="GO" id="GO:0009252">
    <property type="term" value="P:peptidoglycan biosynthetic process"/>
    <property type="evidence" value="ECO:0007669"/>
    <property type="project" value="UniProtKB-UniRule"/>
</dbReference>
<dbReference type="GO" id="GO:0008360">
    <property type="term" value="P:regulation of cell shape"/>
    <property type="evidence" value="ECO:0007669"/>
    <property type="project" value="UniProtKB-KW"/>
</dbReference>
<dbReference type="Gene3D" id="3.90.190.20">
    <property type="entry name" value="Mur ligase, C-terminal domain"/>
    <property type="match status" value="1"/>
</dbReference>
<dbReference type="Gene3D" id="3.40.1190.10">
    <property type="entry name" value="Mur-like, catalytic domain"/>
    <property type="match status" value="1"/>
</dbReference>
<dbReference type="Gene3D" id="3.40.50.720">
    <property type="entry name" value="NAD(P)-binding Rossmann-like Domain"/>
    <property type="match status" value="1"/>
</dbReference>
<dbReference type="HAMAP" id="MF_00046">
    <property type="entry name" value="MurC"/>
    <property type="match status" value="1"/>
</dbReference>
<dbReference type="InterPro" id="IPR036565">
    <property type="entry name" value="Mur-like_cat_sf"/>
</dbReference>
<dbReference type="InterPro" id="IPR004101">
    <property type="entry name" value="Mur_ligase_C"/>
</dbReference>
<dbReference type="InterPro" id="IPR036615">
    <property type="entry name" value="Mur_ligase_C_dom_sf"/>
</dbReference>
<dbReference type="InterPro" id="IPR013221">
    <property type="entry name" value="Mur_ligase_cen"/>
</dbReference>
<dbReference type="InterPro" id="IPR000713">
    <property type="entry name" value="Mur_ligase_N"/>
</dbReference>
<dbReference type="InterPro" id="IPR050061">
    <property type="entry name" value="MurCDEF_pg_biosynth"/>
</dbReference>
<dbReference type="InterPro" id="IPR005758">
    <property type="entry name" value="UDP-N-AcMur_Ala_ligase_MurC"/>
</dbReference>
<dbReference type="NCBIfam" id="TIGR01082">
    <property type="entry name" value="murC"/>
    <property type="match status" value="1"/>
</dbReference>
<dbReference type="PANTHER" id="PTHR43445:SF3">
    <property type="entry name" value="UDP-N-ACETYLMURAMATE--L-ALANINE LIGASE"/>
    <property type="match status" value="1"/>
</dbReference>
<dbReference type="PANTHER" id="PTHR43445">
    <property type="entry name" value="UDP-N-ACETYLMURAMATE--L-ALANINE LIGASE-RELATED"/>
    <property type="match status" value="1"/>
</dbReference>
<dbReference type="Pfam" id="PF01225">
    <property type="entry name" value="Mur_ligase"/>
    <property type="match status" value="1"/>
</dbReference>
<dbReference type="Pfam" id="PF02875">
    <property type="entry name" value="Mur_ligase_C"/>
    <property type="match status" value="1"/>
</dbReference>
<dbReference type="Pfam" id="PF08245">
    <property type="entry name" value="Mur_ligase_M"/>
    <property type="match status" value="1"/>
</dbReference>
<dbReference type="SUPFAM" id="SSF51984">
    <property type="entry name" value="MurCD N-terminal domain"/>
    <property type="match status" value="1"/>
</dbReference>
<dbReference type="SUPFAM" id="SSF53623">
    <property type="entry name" value="MurD-like peptide ligases, catalytic domain"/>
    <property type="match status" value="1"/>
</dbReference>
<dbReference type="SUPFAM" id="SSF53244">
    <property type="entry name" value="MurD-like peptide ligases, peptide-binding domain"/>
    <property type="match status" value="1"/>
</dbReference>
<feature type="chain" id="PRO_1000004383" description="UDP-N-acetylmuramate--L-alanine ligase">
    <location>
        <begin position="1"/>
        <end position="460"/>
    </location>
</feature>
<feature type="binding site" evidence="1">
    <location>
        <begin position="112"/>
        <end position="118"/>
    </location>
    <ligand>
        <name>ATP</name>
        <dbReference type="ChEBI" id="CHEBI:30616"/>
    </ligand>
</feature>
<reference key="1">
    <citation type="submission" date="2006-10" db="EMBL/GenBank/DDBJ databases">
        <title>Complete sequence of chromosome of Pelobacter propionicus DSM 2379.</title>
        <authorList>
            <consortium name="US DOE Joint Genome Institute"/>
            <person name="Copeland A."/>
            <person name="Lucas S."/>
            <person name="Lapidus A."/>
            <person name="Barry K."/>
            <person name="Detter J.C."/>
            <person name="Glavina del Rio T."/>
            <person name="Hammon N."/>
            <person name="Israni S."/>
            <person name="Dalin E."/>
            <person name="Tice H."/>
            <person name="Pitluck S."/>
            <person name="Saunders E."/>
            <person name="Brettin T."/>
            <person name="Bruce D."/>
            <person name="Han C."/>
            <person name="Tapia R."/>
            <person name="Schmutz J."/>
            <person name="Larimer F."/>
            <person name="Land M."/>
            <person name="Hauser L."/>
            <person name="Kyrpides N."/>
            <person name="Kim E."/>
            <person name="Lovley D."/>
            <person name="Richardson P."/>
        </authorList>
    </citation>
    <scope>NUCLEOTIDE SEQUENCE [LARGE SCALE GENOMIC DNA]</scope>
    <source>
        <strain>DSM 2379 / NBRC 103807 / OttBd1</strain>
    </source>
</reference>
<comment type="function">
    <text evidence="1">Cell wall formation.</text>
</comment>
<comment type="catalytic activity">
    <reaction evidence="1">
        <text>UDP-N-acetyl-alpha-D-muramate + L-alanine + ATP = UDP-N-acetyl-alpha-D-muramoyl-L-alanine + ADP + phosphate + H(+)</text>
        <dbReference type="Rhea" id="RHEA:23372"/>
        <dbReference type="ChEBI" id="CHEBI:15378"/>
        <dbReference type="ChEBI" id="CHEBI:30616"/>
        <dbReference type="ChEBI" id="CHEBI:43474"/>
        <dbReference type="ChEBI" id="CHEBI:57972"/>
        <dbReference type="ChEBI" id="CHEBI:70757"/>
        <dbReference type="ChEBI" id="CHEBI:83898"/>
        <dbReference type="ChEBI" id="CHEBI:456216"/>
        <dbReference type="EC" id="6.3.2.8"/>
    </reaction>
</comment>
<comment type="pathway">
    <text evidence="1">Cell wall biogenesis; peptidoglycan biosynthesis.</text>
</comment>
<comment type="subcellular location">
    <subcellularLocation>
        <location evidence="1">Cytoplasm</location>
    </subcellularLocation>
</comment>
<comment type="similarity">
    <text evidence="1">Belongs to the MurCDEF family.</text>
</comment>
<keyword id="KW-0067">ATP-binding</keyword>
<keyword id="KW-0131">Cell cycle</keyword>
<keyword id="KW-0132">Cell division</keyword>
<keyword id="KW-0133">Cell shape</keyword>
<keyword id="KW-0961">Cell wall biogenesis/degradation</keyword>
<keyword id="KW-0963">Cytoplasm</keyword>
<keyword id="KW-0436">Ligase</keyword>
<keyword id="KW-0547">Nucleotide-binding</keyword>
<keyword id="KW-0573">Peptidoglycan synthesis</keyword>
<keyword id="KW-1185">Reference proteome</keyword>